<organism>
    <name type="scientific">Chlorobium phaeovibrioides (strain DSM 265 / 1930)</name>
    <name type="common">Prosthecochloris vibrioformis (strain DSM 265)</name>
    <dbReference type="NCBI Taxonomy" id="290318"/>
    <lineage>
        <taxon>Bacteria</taxon>
        <taxon>Pseudomonadati</taxon>
        <taxon>Chlorobiota</taxon>
        <taxon>Chlorobiia</taxon>
        <taxon>Chlorobiales</taxon>
        <taxon>Chlorobiaceae</taxon>
        <taxon>Chlorobium/Pelodictyon group</taxon>
        <taxon>Chlorobium</taxon>
    </lineage>
</organism>
<feature type="chain" id="PRO_0000353408" description="DNA-directed RNA polymerase subunit beta'">
    <location>
        <begin position="1"/>
        <end position="1484"/>
    </location>
</feature>
<feature type="binding site" evidence="1">
    <location>
        <position position="67"/>
    </location>
    <ligand>
        <name>Zn(2+)</name>
        <dbReference type="ChEBI" id="CHEBI:29105"/>
        <label>1</label>
    </ligand>
</feature>
<feature type="binding site" evidence="1">
    <location>
        <position position="69"/>
    </location>
    <ligand>
        <name>Zn(2+)</name>
        <dbReference type="ChEBI" id="CHEBI:29105"/>
        <label>1</label>
    </ligand>
</feature>
<feature type="binding site" evidence="1">
    <location>
        <position position="82"/>
    </location>
    <ligand>
        <name>Zn(2+)</name>
        <dbReference type="ChEBI" id="CHEBI:29105"/>
        <label>1</label>
    </ligand>
</feature>
<feature type="binding site" evidence="1">
    <location>
        <position position="85"/>
    </location>
    <ligand>
        <name>Zn(2+)</name>
        <dbReference type="ChEBI" id="CHEBI:29105"/>
        <label>1</label>
    </ligand>
</feature>
<feature type="binding site" evidence="1">
    <location>
        <position position="499"/>
    </location>
    <ligand>
        <name>Mg(2+)</name>
        <dbReference type="ChEBI" id="CHEBI:18420"/>
    </ligand>
</feature>
<feature type="binding site" evidence="1">
    <location>
        <position position="501"/>
    </location>
    <ligand>
        <name>Mg(2+)</name>
        <dbReference type="ChEBI" id="CHEBI:18420"/>
    </ligand>
</feature>
<feature type="binding site" evidence="1">
    <location>
        <position position="503"/>
    </location>
    <ligand>
        <name>Mg(2+)</name>
        <dbReference type="ChEBI" id="CHEBI:18420"/>
    </ligand>
</feature>
<feature type="binding site" evidence="1">
    <location>
        <position position="867"/>
    </location>
    <ligand>
        <name>Zn(2+)</name>
        <dbReference type="ChEBI" id="CHEBI:29105"/>
        <label>2</label>
    </ligand>
</feature>
<feature type="binding site" evidence="1">
    <location>
        <position position="943"/>
    </location>
    <ligand>
        <name>Zn(2+)</name>
        <dbReference type="ChEBI" id="CHEBI:29105"/>
        <label>2</label>
    </ligand>
</feature>
<feature type="binding site" evidence="1">
    <location>
        <position position="950"/>
    </location>
    <ligand>
        <name>Zn(2+)</name>
        <dbReference type="ChEBI" id="CHEBI:29105"/>
        <label>2</label>
    </ligand>
</feature>
<feature type="binding site" evidence="1">
    <location>
        <position position="953"/>
    </location>
    <ligand>
        <name>Zn(2+)</name>
        <dbReference type="ChEBI" id="CHEBI:29105"/>
        <label>2</label>
    </ligand>
</feature>
<protein>
    <recommendedName>
        <fullName evidence="1">DNA-directed RNA polymerase subunit beta'</fullName>
        <shortName evidence="1">RNAP subunit beta'</shortName>
        <ecNumber evidence="1">2.7.7.6</ecNumber>
    </recommendedName>
    <alternativeName>
        <fullName evidence="1">RNA polymerase subunit beta'</fullName>
    </alternativeName>
    <alternativeName>
        <fullName evidence="1">Transcriptase subunit beta'</fullName>
    </alternativeName>
</protein>
<comment type="function">
    <text evidence="1">DNA-dependent RNA polymerase catalyzes the transcription of DNA into RNA using the four ribonucleoside triphosphates as substrates.</text>
</comment>
<comment type="catalytic activity">
    <reaction evidence="1">
        <text>RNA(n) + a ribonucleoside 5'-triphosphate = RNA(n+1) + diphosphate</text>
        <dbReference type="Rhea" id="RHEA:21248"/>
        <dbReference type="Rhea" id="RHEA-COMP:14527"/>
        <dbReference type="Rhea" id="RHEA-COMP:17342"/>
        <dbReference type="ChEBI" id="CHEBI:33019"/>
        <dbReference type="ChEBI" id="CHEBI:61557"/>
        <dbReference type="ChEBI" id="CHEBI:140395"/>
        <dbReference type="EC" id="2.7.7.6"/>
    </reaction>
</comment>
<comment type="cofactor">
    <cofactor evidence="1">
        <name>Mg(2+)</name>
        <dbReference type="ChEBI" id="CHEBI:18420"/>
    </cofactor>
    <text evidence="1">Binds 1 Mg(2+) ion per subunit.</text>
</comment>
<comment type="cofactor">
    <cofactor evidence="1">
        <name>Zn(2+)</name>
        <dbReference type="ChEBI" id="CHEBI:29105"/>
    </cofactor>
    <text evidence="1">Binds 2 Zn(2+) ions per subunit.</text>
</comment>
<comment type="subunit">
    <text evidence="1">The RNAP catalytic core consists of 2 alpha, 1 beta, 1 beta' and 1 omega subunit. When a sigma factor is associated with the core the holoenzyme is formed, which can initiate transcription.</text>
</comment>
<comment type="similarity">
    <text evidence="1">Belongs to the RNA polymerase beta' chain family.</text>
</comment>
<keyword id="KW-0240">DNA-directed RNA polymerase</keyword>
<keyword id="KW-0460">Magnesium</keyword>
<keyword id="KW-0479">Metal-binding</keyword>
<keyword id="KW-0548">Nucleotidyltransferase</keyword>
<keyword id="KW-0804">Transcription</keyword>
<keyword id="KW-0808">Transferase</keyword>
<keyword id="KW-0862">Zinc</keyword>
<sequence length="1484" mass="165024">MIFSQGASPLKGDFSRIKFSIASPESILAHSRGEVLKPETINYRTFKPERDGLMCEKIFGPTKDWECYCGKYKRVRYKGIICDRCGVEVTTKSVRRERMGHIALAVPVVHTWFFRSVPSKIGALLDLSTKELERIIYYEVYVVINPGEPGEKQGIKKLDRLTEEQYFQIITEFEDNQDLDDSDPAKFVAKMGGEAIHLLLRNLDLDASAVHLRTILKESSSEQKRADALKRLKVVEAFRKSYEPHRKVRKKSTGLFPEDEMPEPYIYEGNKPEYMVMEAIPVIPPELRPLVPLEGGRFATSDLNDLYRRVIIRNNRLKKLIDIRAPEVILRNEKRMLQEAVDALFDNSRKANAVKTGESNRPLKSLSDSLKGKQGRFRQNLLGKRVDYSGRSVIVVGPELKLHQCGLPKSMAIELFQPFVIRRLVERGIAKSVKSAKKLIDKKDPVVWDVLEKVIDGRPVLLNRAPTLHRLGIQAFQPTLIEGKAIQLHPLVCTAFNADFDGDQMAVHVPLSQEAQLEASLLMLSSHNLILPQSGKPVTVPSQDMVLGMYYLTKSRSGGVGEGSVFYSREDVLIAHNEERVGLHTQIFIQHTGRIDQKFDPLRVLDLVVEPGTEKHTWLKSQLEQKKLILTTVGRVIFNESVPDEIGFINRVIDKKGAKELIGRLSSEVGNVETARFLDNIKQVGFFYAMKGGLSVSLSDAIVPETKAKHIKGAQRDSTRVVKEYNRGTLTDNERYNQIVDVWQKTSNIVAEESYQILKKDRAGFNPLYMMLDSGARGSREQVRQLTGMRGLIARPQKSMSGQPGEIIENPIISNLKEGLTVLEYFISTHGARKGLSDTSLKTADAGYLTRRLHDVAQDVIVTMEDCGTTRGLLIYRNIEEETSGQIKFREKIRGRVTARDIVDTITGNVIVPAGETITDAHAELIQDTPGVEEAEIRSVLTCEAKQGICSKCYGTNLSVHKPVEIGEAVGVIAAQSIGEPGTQLTLRTFHQGGTAQGGISETETKAVNEGTVQFEDIKTVDHSAINEDGVEEDSVIVIQKNGKINLVDSDSGKVLKRYVVPHGAHLACKAGDLVRKDQVLFSSEPNSTQIIAEINGTIKFADIEKGVTYKEEVDPQTGFAQHTIINWRSKLRATETREPRLMIVDETGEVRKTYPVPIKSNLYVEDGQKVVPGDIMAKVPRNLDRSGGDITAGLPKVTELFEARIPSDPAIVTEIDGYVSFGSQRRSSKEIKVKNDFGEEKVYYVQVGKHVLANEGDEVKAGDPLTDGAVSPQDILRIQGPNAVQQYLVNEIQKVYQINAGVEINDKHLEVIVRQMLQKVRVEEPGDTEMLPGDLIDRSAFLEANESVAEKVRITERGDAPARMQDEELQKLRDITKLNRELRKNGKVMIAYEPALQGTSHPVLLGITSAALQTESVISAASFQETTKVLTDAAVAGKVDHLAGLKENVIVGKLIPAGTGLKKYKTLRLIGEPEAEAPAKEDA</sequence>
<accession>A4SGK5</accession>
<dbReference type="EC" id="2.7.7.6" evidence="1"/>
<dbReference type="EMBL" id="CP000607">
    <property type="protein sequence ID" value="ABP37614.1"/>
    <property type="molecule type" value="Genomic_DNA"/>
</dbReference>
<dbReference type="SMR" id="A4SGK5"/>
<dbReference type="STRING" id="290318.Cvib_1604"/>
<dbReference type="KEGG" id="pvi:Cvib_1604"/>
<dbReference type="eggNOG" id="COG0086">
    <property type="taxonomic scope" value="Bacteria"/>
</dbReference>
<dbReference type="HOGENOM" id="CLU_000524_3_1_10"/>
<dbReference type="OrthoDB" id="9815296at2"/>
<dbReference type="GO" id="GO:0000428">
    <property type="term" value="C:DNA-directed RNA polymerase complex"/>
    <property type="evidence" value="ECO:0007669"/>
    <property type="project" value="UniProtKB-KW"/>
</dbReference>
<dbReference type="GO" id="GO:0003677">
    <property type="term" value="F:DNA binding"/>
    <property type="evidence" value="ECO:0007669"/>
    <property type="project" value="UniProtKB-UniRule"/>
</dbReference>
<dbReference type="GO" id="GO:0003899">
    <property type="term" value="F:DNA-directed RNA polymerase activity"/>
    <property type="evidence" value="ECO:0007669"/>
    <property type="project" value="UniProtKB-UniRule"/>
</dbReference>
<dbReference type="GO" id="GO:0000287">
    <property type="term" value="F:magnesium ion binding"/>
    <property type="evidence" value="ECO:0007669"/>
    <property type="project" value="UniProtKB-UniRule"/>
</dbReference>
<dbReference type="GO" id="GO:0008270">
    <property type="term" value="F:zinc ion binding"/>
    <property type="evidence" value="ECO:0007669"/>
    <property type="project" value="UniProtKB-UniRule"/>
</dbReference>
<dbReference type="GO" id="GO:0006351">
    <property type="term" value="P:DNA-templated transcription"/>
    <property type="evidence" value="ECO:0007669"/>
    <property type="project" value="UniProtKB-UniRule"/>
</dbReference>
<dbReference type="CDD" id="cd02655">
    <property type="entry name" value="RNAP_beta'_C"/>
    <property type="match status" value="1"/>
</dbReference>
<dbReference type="CDD" id="cd01609">
    <property type="entry name" value="RNAP_beta'_N"/>
    <property type="match status" value="1"/>
</dbReference>
<dbReference type="Gene3D" id="1.10.132.30">
    <property type="match status" value="1"/>
</dbReference>
<dbReference type="Gene3D" id="1.10.150.390">
    <property type="match status" value="1"/>
</dbReference>
<dbReference type="Gene3D" id="1.10.1790.20">
    <property type="match status" value="1"/>
</dbReference>
<dbReference type="Gene3D" id="1.10.40.90">
    <property type="match status" value="1"/>
</dbReference>
<dbReference type="Gene3D" id="2.40.40.20">
    <property type="match status" value="1"/>
</dbReference>
<dbReference type="Gene3D" id="2.40.50.100">
    <property type="match status" value="3"/>
</dbReference>
<dbReference type="Gene3D" id="4.10.860.120">
    <property type="entry name" value="RNA polymerase II, clamp domain"/>
    <property type="match status" value="1"/>
</dbReference>
<dbReference type="Gene3D" id="1.10.274.100">
    <property type="entry name" value="RNA polymerase Rpb1, domain 3"/>
    <property type="match status" value="1"/>
</dbReference>
<dbReference type="HAMAP" id="MF_01322">
    <property type="entry name" value="RNApol_bact_RpoC"/>
    <property type="match status" value="1"/>
</dbReference>
<dbReference type="InterPro" id="IPR045867">
    <property type="entry name" value="DNA-dir_RpoC_beta_prime"/>
</dbReference>
<dbReference type="InterPro" id="IPR012754">
    <property type="entry name" value="DNA-dir_RpoC_beta_prime_bact"/>
</dbReference>
<dbReference type="InterPro" id="IPR000722">
    <property type="entry name" value="RNA_pol_asu"/>
</dbReference>
<dbReference type="InterPro" id="IPR006592">
    <property type="entry name" value="RNA_pol_N"/>
</dbReference>
<dbReference type="InterPro" id="IPR007080">
    <property type="entry name" value="RNA_pol_Rpb1_1"/>
</dbReference>
<dbReference type="InterPro" id="IPR007066">
    <property type="entry name" value="RNA_pol_Rpb1_3"/>
</dbReference>
<dbReference type="InterPro" id="IPR042102">
    <property type="entry name" value="RNA_pol_Rpb1_3_sf"/>
</dbReference>
<dbReference type="InterPro" id="IPR007083">
    <property type="entry name" value="RNA_pol_Rpb1_4"/>
</dbReference>
<dbReference type="InterPro" id="IPR007081">
    <property type="entry name" value="RNA_pol_Rpb1_5"/>
</dbReference>
<dbReference type="InterPro" id="IPR044893">
    <property type="entry name" value="RNA_pol_Rpb1_clamp_domain"/>
</dbReference>
<dbReference type="InterPro" id="IPR038120">
    <property type="entry name" value="Rpb1_funnel_sf"/>
</dbReference>
<dbReference type="NCBIfam" id="TIGR02386">
    <property type="entry name" value="rpoC_TIGR"/>
    <property type="match status" value="1"/>
</dbReference>
<dbReference type="PANTHER" id="PTHR19376">
    <property type="entry name" value="DNA-DIRECTED RNA POLYMERASE"/>
    <property type="match status" value="1"/>
</dbReference>
<dbReference type="PANTHER" id="PTHR19376:SF54">
    <property type="entry name" value="DNA-DIRECTED RNA POLYMERASE SUBUNIT BETA"/>
    <property type="match status" value="1"/>
</dbReference>
<dbReference type="Pfam" id="PF04997">
    <property type="entry name" value="RNA_pol_Rpb1_1"/>
    <property type="match status" value="1"/>
</dbReference>
<dbReference type="Pfam" id="PF00623">
    <property type="entry name" value="RNA_pol_Rpb1_2"/>
    <property type="match status" value="1"/>
</dbReference>
<dbReference type="Pfam" id="PF04983">
    <property type="entry name" value="RNA_pol_Rpb1_3"/>
    <property type="match status" value="1"/>
</dbReference>
<dbReference type="Pfam" id="PF05000">
    <property type="entry name" value="RNA_pol_Rpb1_4"/>
    <property type="match status" value="1"/>
</dbReference>
<dbReference type="Pfam" id="PF04998">
    <property type="entry name" value="RNA_pol_Rpb1_5"/>
    <property type="match status" value="1"/>
</dbReference>
<dbReference type="SMART" id="SM00663">
    <property type="entry name" value="RPOLA_N"/>
    <property type="match status" value="1"/>
</dbReference>
<dbReference type="SUPFAM" id="SSF64484">
    <property type="entry name" value="beta and beta-prime subunits of DNA dependent RNA-polymerase"/>
    <property type="match status" value="1"/>
</dbReference>
<reference key="1">
    <citation type="submission" date="2007-03" db="EMBL/GenBank/DDBJ databases">
        <title>Complete sequence of Prosthecochloris vibrioformis DSM 265.</title>
        <authorList>
            <consortium name="US DOE Joint Genome Institute"/>
            <person name="Copeland A."/>
            <person name="Lucas S."/>
            <person name="Lapidus A."/>
            <person name="Barry K."/>
            <person name="Detter J.C."/>
            <person name="Glavina del Rio T."/>
            <person name="Hammon N."/>
            <person name="Israni S."/>
            <person name="Pitluck S."/>
            <person name="Schmutz J."/>
            <person name="Larimer F."/>
            <person name="Land M."/>
            <person name="Hauser L."/>
            <person name="Mikhailova N."/>
            <person name="Li T."/>
            <person name="Overmann J."/>
            <person name="Schuster S.C."/>
            <person name="Bryant D.A."/>
            <person name="Richardson P."/>
        </authorList>
    </citation>
    <scope>NUCLEOTIDE SEQUENCE [LARGE SCALE GENOMIC DNA]</scope>
    <source>
        <strain>DSM 265 / 1930</strain>
    </source>
</reference>
<proteinExistence type="inferred from homology"/>
<evidence type="ECO:0000255" key="1">
    <source>
        <dbReference type="HAMAP-Rule" id="MF_01322"/>
    </source>
</evidence>
<name>RPOC_CHLPM</name>
<gene>
    <name evidence="1" type="primary">rpoC</name>
    <name type="ordered locus">Cvib_1604</name>
</gene>